<accession>Q8LRK8</accession>
<accession>Q9FNQ7</accession>
<comment type="function">
    <text evidence="3 5 8">Responsible for the deacetylation of lysine residues on the N-terminal part of the core histones (H2A, H2B, H3 and H4) (PubMed:23362208). Histone deacetylation gives a tag for epigenetic repression and plays an important role in transcriptional regulation, cell cycle progression and developmental events (Probable). Histone deacetylases act via the formation of large multiprotein complexes (Probable). Required for appropriate cellular patterning in the root epidermis (PubMed:16176989, PubMed:23362208). Involved in the differentiation of hair and non-hair cells in the root epidermis (PubMed:23362208). Is not directly involved in the regulation of the expression of pattern genes (PubMed:23362208). Regulates the transcription of certain kinase genes, which are components of a positional information relay system, by changing their histone acetylation status (PubMed:23362208).</text>
</comment>
<comment type="catalytic activity">
    <reaction evidence="5">
        <text>N(6)-acetyl-L-lysyl-[histone] + H2O = L-lysyl-[histone] + acetate</text>
        <dbReference type="Rhea" id="RHEA:58196"/>
        <dbReference type="Rhea" id="RHEA-COMP:9845"/>
        <dbReference type="Rhea" id="RHEA-COMP:11338"/>
        <dbReference type="ChEBI" id="CHEBI:15377"/>
        <dbReference type="ChEBI" id="CHEBI:29969"/>
        <dbReference type="ChEBI" id="CHEBI:30089"/>
        <dbReference type="ChEBI" id="CHEBI:61930"/>
        <dbReference type="EC" id="3.5.1.98"/>
    </reaction>
    <physiologicalReaction direction="left-to-right" evidence="5">
        <dbReference type="Rhea" id="RHEA:58197"/>
    </physiologicalReaction>
</comment>
<comment type="cofactor">
    <cofactor evidence="1">
        <name>Zn(2+)</name>
        <dbReference type="ChEBI" id="CHEBI:29105"/>
    </cofactor>
    <text evidence="1">Binds 1 zinc ion per subunit.</text>
</comment>
<comment type="subcellular location">
    <subcellularLocation>
        <location evidence="5">Nucleus</location>
    </subcellularLocation>
    <subcellularLocation>
        <location evidence="5">Cytoplasm</location>
    </subcellularLocation>
</comment>
<comment type="tissue specificity">
    <text evidence="4">Expressed in roots, stems, young rosette leaves, flowers and siliques.</text>
</comment>
<comment type="miscellaneous">
    <text evidence="3">HDA5, a tandem duplication of HDA18, is not required for the cellular patterning in the root epidermis.</text>
</comment>
<comment type="similarity">
    <text evidence="7">Belongs to the histone deacetylase family. HD type 2 subfamily.</text>
</comment>
<comment type="sequence caution" evidence="7">
    <conflict type="erroneous gene model prediction">
        <sequence resource="EMBL-CDS" id="BAB10370"/>
    </conflict>
</comment>
<sequence length="682" mass="76634">MLLKFEASSELRLVDPSVSLTVLRKIRLSHLPDMTMTSESSGKKCGEGDGKVAGKSQRKVGLVYDETMCKHDTPNGKVDVECPDRIRVIWEKLQLAGVTQRCVVLGGSKAEDKHLKLVHTKKHVNLVKSISTKKKDSRRNKIASQLDSIYLNGGSSEAAYLAAGSVVKVAEKVAEGELDCGFAIVRPPGHHAESDEAMGFCLFNNVAVAASFLLNERPDLDVKKILIVDWDIHHGNGTQKMFWKDSRVLIFSVHRHDHGSFYPFGDDGDFNMVGEGPGEGFNINVPWEQGGCGDADYLAVWNHILIPVTKEFKPDIILLSAGFDAAIGDPLGGCCVTPYGYSVMLKKLMEFAHGKIVLALEGGYNLESLGKSSLACVQVLLEDKQIHGSSETYPLESTRRVIQAVRERLCTYWPSLDASMASNENLKNPSAERNSADALLREVEELKSLMAARDGELEARRKELKAKNKELEANEKELEAGLMLIRAREDVICGLHAKIESLQQERDEAVAKAERIDKELQEDRARSQEFKEDTEFCLSTLRREKELAIMAKNKDLEAKEKELEARLMLVHAREDKIHAKIERLQQERDEAVAKAERIDKELQEDRSRSRVGNGSFAFSQEFYEDMDLDELEPLSPEFNEDMDSEELEPFQVIKKNMERSHKKFIKDMECIKFIASERARVL</sequence>
<protein>
    <recommendedName>
        <fullName evidence="6">Histone deacetylase 18</fullName>
        <ecNumber evidence="5">3.5.1.98</ecNumber>
    </recommendedName>
</protein>
<dbReference type="EC" id="3.5.1.98" evidence="5"/>
<dbReference type="EMBL" id="AF510670">
    <property type="protein sequence ID" value="AAM34783.1"/>
    <property type="molecule type" value="mRNA"/>
</dbReference>
<dbReference type="EMBL" id="AB006696">
    <property type="protein sequence ID" value="BAB10370.1"/>
    <property type="status" value="ALT_SEQ"/>
    <property type="molecule type" value="Genomic_DNA"/>
</dbReference>
<dbReference type="EMBL" id="CP002688">
    <property type="protein sequence ID" value="AED97419.1"/>
    <property type="molecule type" value="Genomic_DNA"/>
</dbReference>
<dbReference type="RefSeq" id="NP_200915.2">
    <property type="nucleotide sequence ID" value="NM_125500.3"/>
</dbReference>
<dbReference type="SMR" id="Q8LRK8"/>
<dbReference type="BioGRID" id="21472">
    <property type="interactions" value="1"/>
</dbReference>
<dbReference type="FunCoup" id="Q8LRK8">
    <property type="interactions" value="683"/>
</dbReference>
<dbReference type="STRING" id="3702.Q8LRK8"/>
<dbReference type="PaxDb" id="3702-AT5G61070.1"/>
<dbReference type="ProteomicsDB" id="230287"/>
<dbReference type="EnsemblPlants" id="AT5G61070.1">
    <property type="protein sequence ID" value="AT5G61070.1"/>
    <property type="gene ID" value="AT5G61070"/>
</dbReference>
<dbReference type="GeneID" id="836228"/>
<dbReference type="Gramene" id="AT5G61070.1">
    <property type="protein sequence ID" value="AT5G61070.1"/>
    <property type="gene ID" value="AT5G61070"/>
</dbReference>
<dbReference type="KEGG" id="ath:AT5G61070"/>
<dbReference type="Araport" id="AT5G61070"/>
<dbReference type="TAIR" id="AT5G61070">
    <property type="gene designation" value="HDA18"/>
</dbReference>
<dbReference type="eggNOG" id="KOG1343">
    <property type="taxonomic scope" value="Eukaryota"/>
</dbReference>
<dbReference type="HOGENOM" id="CLU_019490_0_0_1"/>
<dbReference type="InParanoid" id="Q8LRK8"/>
<dbReference type="OMA" id="ERLCTYW"/>
<dbReference type="OrthoDB" id="424012at2759"/>
<dbReference type="PhylomeDB" id="Q8LRK8"/>
<dbReference type="PRO" id="PR:Q8LRK8"/>
<dbReference type="Proteomes" id="UP000006548">
    <property type="component" value="Chromosome 5"/>
</dbReference>
<dbReference type="ExpressionAtlas" id="Q8LRK8">
    <property type="expression patterns" value="baseline and differential"/>
</dbReference>
<dbReference type="GO" id="GO:0005737">
    <property type="term" value="C:cytoplasm"/>
    <property type="evidence" value="ECO:0000314"/>
    <property type="project" value="TAIR"/>
</dbReference>
<dbReference type="GO" id="GO:0005634">
    <property type="term" value="C:nucleus"/>
    <property type="evidence" value="ECO:0000314"/>
    <property type="project" value="TAIR"/>
</dbReference>
<dbReference type="GO" id="GO:0004407">
    <property type="term" value="F:histone deacetylase activity"/>
    <property type="evidence" value="ECO:0000314"/>
    <property type="project" value="TAIR"/>
</dbReference>
<dbReference type="GO" id="GO:0141221">
    <property type="term" value="F:histone deacetylase activity, hydrolytic mechanism"/>
    <property type="evidence" value="ECO:0007669"/>
    <property type="project" value="UniProtKB-EC"/>
</dbReference>
<dbReference type="GO" id="GO:0008270">
    <property type="term" value="F:zinc ion binding"/>
    <property type="evidence" value="ECO:0000250"/>
    <property type="project" value="UniProtKB"/>
</dbReference>
<dbReference type="GO" id="GO:0006338">
    <property type="term" value="P:chromatin remodeling"/>
    <property type="evidence" value="ECO:0000250"/>
    <property type="project" value="TAIR"/>
</dbReference>
<dbReference type="GO" id="GO:0045604">
    <property type="term" value="P:regulation of epidermal cell differentiation"/>
    <property type="evidence" value="ECO:0000315"/>
    <property type="project" value="TAIR"/>
</dbReference>
<dbReference type="GO" id="GO:0010053">
    <property type="term" value="P:root epidermal cell differentiation"/>
    <property type="evidence" value="ECO:0000315"/>
    <property type="project" value="TAIR"/>
</dbReference>
<dbReference type="FunFam" id="3.40.800.20:FF:000014">
    <property type="entry name" value="Histone deacetylase 15"/>
    <property type="match status" value="1"/>
</dbReference>
<dbReference type="Gene3D" id="3.40.800.20">
    <property type="entry name" value="Histone deacetylase domain"/>
    <property type="match status" value="1"/>
</dbReference>
<dbReference type="InterPro" id="IPR050284">
    <property type="entry name" value="HDAC_PDAC"/>
</dbReference>
<dbReference type="InterPro" id="IPR000286">
    <property type="entry name" value="His_deacetylse"/>
</dbReference>
<dbReference type="InterPro" id="IPR023801">
    <property type="entry name" value="His_deacetylse_dom"/>
</dbReference>
<dbReference type="InterPro" id="IPR037138">
    <property type="entry name" value="His_deacetylse_dom_sf"/>
</dbReference>
<dbReference type="InterPro" id="IPR023696">
    <property type="entry name" value="Ureohydrolase_dom_sf"/>
</dbReference>
<dbReference type="PANTHER" id="PTHR10625:SF25">
    <property type="entry name" value="HISTONE DEACETYLASE 18-RELATED"/>
    <property type="match status" value="1"/>
</dbReference>
<dbReference type="PANTHER" id="PTHR10625">
    <property type="entry name" value="HISTONE DEACETYLASE HDAC1-RELATED"/>
    <property type="match status" value="1"/>
</dbReference>
<dbReference type="Pfam" id="PF00850">
    <property type="entry name" value="Hist_deacetyl"/>
    <property type="match status" value="1"/>
</dbReference>
<dbReference type="PRINTS" id="PR01270">
    <property type="entry name" value="HDASUPER"/>
</dbReference>
<dbReference type="SUPFAM" id="SSF52768">
    <property type="entry name" value="Arginase/deacetylase"/>
    <property type="match status" value="1"/>
</dbReference>
<proteinExistence type="evidence at protein level"/>
<name>HDA18_ARATH</name>
<evidence type="ECO:0000250" key="1">
    <source>
        <dbReference type="UniProtKB" id="Q8GXJ1"/>
    </source>
</evidence>
<evidence type="ECO:0000255" key="2"/>
<evidence type="ECO:0000269" key="3">
    <source>
    </source>
</evidence>
<evidence type="ECO:0000269" key="4">
    <source>
    </source>
</evidence>
<evidence type="ECO:0000269" key="5">
    <source>
    </source>
</evidence>
<evidence type="ECO:0000303" key="6">
    <source>
    </source>
</evidence>
<evidence type="ECO:0000305" key="7"/>
<evidence type="ECO:0000305" key="8">
    <source>
    </source>
</evidence>
<evidence type="ECO:0000312" key="9">
    <source>
        <dbReference type="Araport" id="AT5G61070"/>
    </source>
</evidence>
<evidence type="ECO:0000312" key="10">
    <source>
        <dbReference type="EMBL" id="BAB10370.1"/>
    </source>
</evidence>
<gene>
    <name evidence="6" type="primary">HDA18</name>
    <name evidence="9" type="ordered locus">At5g61070</name>
    <name evidence="10" type="ORF">MAF19.8</name>
</gene>
<reference key="1">
    <citation type="journal article" date="2002" name="Nucleic Acids Res.">
        <title>Analysis of histone acetyltransferase and histone deacetylase families of Arabidopsis thaliana suggests functional diversification of chromatin modification among multicellular eukaryotes.</title>
        <authorList>
            <person name="Pandey R."/>
            <person name="Mueller A."/>
            <person name="Napoli C.A."/>
            <person name="Selinger D.A."/>
            <person name="Pikaard C.S."/>
            <person name="Richards E.J."/>
            <person name="Bender J."/>
            <person name="Mount D.W."/>
            <person name="Jorgensen R.A."/>
        </authorList>
    </citation>
    <scope>NUCLEOTIDE SEQUENCE [MRNA]</scope>
    <scope>GENE FAMILY</scope>
    <scope>NOMENCLATURE</scope>
</reference>
<reference key="2">
    <citation type="journal article" date="1997" name="DNA Res.">
        <title>Structural analysis of Arabidopsis thaliana chromosome 5. II. Sequence features of the regions of 1,044,062 bp covered by thirteen physically assigned P1 clones.</title>
        <authorList>
            <person name="Kotani H."/>
            <person name="Nakamura Y."/>
            <person name="Sato S."/>
            <person name="Kaneko T."/>
            <person name="Asamizu E."/>
            <person name="Miyajima N."/>
            <person name="Tabata S."/>
        </authorList>
    </citation>
    <scope>NUCLEOTIDE SEQUENCE [LARGE SCALE GENOMIC DNA]</scope>
    <source>
        <strain>cv. Columbia</strain>
    </source>
</reference>
<reference key="3">
    <citation type="journal article" date="2017" name="Plant J.">
        <title>Araport11: a complete reannotation of the Arabidopsis thaliana reference genome.</title>
        <authorList>
            <person name="Cheng C.Y."/>
            <person name="Krishnakumar V."/>
            <person name="Chan A.P."/>
            <person name="Thibaud-Nissen F."/>
            <person name="Schobel S."/>
            <person name="Town C.D."/>
        </authorList>
    </citation>
    <scope>GENOME REANNOTATION</scope>
    <source>
        <strain>cv. Columbia</strain>
    </source>
</reference>
<reference key="4">
    <citation type="journal article" date="2005" name="Proc. Natl. Acad. Sci. U.S.A.">
        <title>Histone acetylation affects expression of cellular patterning genes in the Arabidopsis root epidermis.</title>
        <authorList>
            <person name="Xu C.-R."/>
            <person name="Liu C."/>
            <person name="Wang Y.-L."/>
            <person name="Li L.-C."/>
            <person name="Chen W.-Q."/>
            <person name="Xu Z.-H."/>
            <person name="Bai S.-N."/>
        </authorList>
    </citation>
    <scope>FUNCTION</scope>
</reference>
<reference key="5">
    <citation type="journal article" date="2013" name="Plant Cell">
        <title>HDA18 affects cell fate in Arabidopsis root epidermis via histone acetylation at four kinase genes.</title>
        <authorList>
            <person name="Liu C."/>
            <person name="Li L.C."/>
            <person name="Chen W.Q."/>
            <person name="Chen X."/>
            <person name="Xu Z.H."/>
            <person name="Bai S.N."/>
        </authorList>
    </citation>
    <scope>FUNCTION</scope>
    <scope>CATALYTIC ACTIVITY</scope>
    <scope>SUBCELLULAR LOCATION</scope>
</reference>
<reference key="6">
    <citation type="journal article" date="2012" name="PLoS ONE">
        <title>Subcellular localization of class II HDAs in Arabidopsis thaliana: nucleocytoplasmic shuttling of HDA15 is driven by light.</title>
        <authorList>
            <person name="Alinsug M.V."/>
            <person name="Chen F.F."/>
            <person name="Luo M."/>
            <person name="Tai R."/>
            <person name="Jiang L."/>
            <person name="Wu K."/>
        </authorList>
    </citation>
    <scope>TISSUE SPECIFICITY</scope>
</reference>
<keyword id="KW-0156">Chromatin regulator</keyword>
<keyword id="KW-0175">Coiled coil</keyword>
<keyword id="KW-0963">Cytoplasm</keyword>
<keyword id="KW-0378">Hydrolase</keyword>
<keyword id="KW-0479">Metal-binding</keyword>
<keyword id="KW-0539">Nucleus</keyword>
<keyword id="KW-1185">Reference proteome</keyword>
<keyword id="KW-0678">Repressor</keyword>
<keyword id="KW-0804">Transcription</keyword>
<keyword id="KW-0805">Transcription regulation</keyword>
<keyword id="KW-0862">Zinc</keyword>
<feature type="chain" id="PRO_0000280093" description="Histone deacetylase 18">
    <location>
        <begin position="1"/>
        <end position="682"/>
    </location>
</feature>
<feature type="region of interest" description="Histone deacetylase">
    <location>
        <begin position="59"/>
        <end position="382"/>
    </location>
</feature>
<feature type="coiled-coil region" evidence="2">
    <location>
        <begin position="430"/>
        <end position="608"/>
    </location>
</feature>
<feature type="active site" description="Proton donor/acceptor" evidence="1">
    <location>
        <position position="191"/>
    </location>
</feature>
<feature type="binding site" evidence="1">
    <location>
        <position position="231"/>
    </location>
    <ligand>
        <name>Zn(2+)</name>
        <dbReference type="ChEBI" id="CHEBI:29105"/>
    </ligand>
</feature>
<feature type="binding site" evidence="1">
    <location>
        <position position="233"/>
    </location>
    <ligand>
        <name>Zn(2+)</name>
        <dbReference type="ChEBI" id="CHEBI:29105"/>
    </ligand>
</feature>
<feature type="binding site" evidence="1">
    <location>
        <position position="324"/>
    </location>
    <ligand>
        <name>Zn(2+)</name>
        <dbReference type="ChEBI" id="CHEBI:29105"/>
    </ligand>
</feature>
<feature type="site" description="Polarizes the scissile carbonyl of the substrate" evidence="1">
    <location>
        <position position="364"/>
    </location>
</feature>
<organism>
    <name type="scientific">Arabidopsis thaliana</name>
    <name type="common">Mouse-ear cress</name>
    <dbReference type="NCBI Taxonomy" id="3702"/>
    <lineage>
        <taxon>Eukaryota</taxon>
        <taxon>Viridiplantae</taxon>
        <taxon>Streptophyta</taxon>
        <taxon>Embryophyta</taxon>
        <taxon>Tracheophyta</taxon>
        <taxon>Spermatophyta</taxon>
        <taxon>Magnoliopsida</taxon>
        <taxon>eudicotyledons</taxon>
        <taxon>Gunneridae</taxon>
        <taxon>Pentapetalae</taxon>
        <taxon>rosids</taxon>
        <taxon>malvids</taxon>
        <taxon>Brassicales</taxon>
        <taxon>Brassicaceae</taxon>
        <taxon>Camelineae</taxon>
        <taxon>Arabidopsis</taxon>
    </lineage>
</organism>